<sequence>MKKIIKVEAVEKHFGNQVIIPPLSLDIKEGEFLTILGPSGCGKTTLLRMIAGFETPTKGNLLLDDEKINDLPPYKRHMNLVFQHYALFPHMNVEKNICFGMKMQKVPAAEQKERAEEAMRLTQLLEFRNRKPAKLSGGQQQRVAIARAIVNNPRVLLLDEPLGALDFKLRKDLQRELKNLQRNLGITFIYVTHDQEEAMSMSDRIVVMNKGHIEQIGTPKEIYNKPKTLFVATFIGENNIVKNGEGYVAIRPENVKVRSVEEPILKEYHLGHIEDIEFVGNMEKLYVRDEKTSELLMAYQTAEEAAQWSIGDNVYVGWEQEDEVTLN</sequence>
<dbReference type="EC" id="7.6.2.11" evidence="1"/>
<dbReference type="EMBL" id="CP000485">
    <property type="protein sequence ID" value="ABK84503.1"/>
    <property type="molecule type" value="Genomic_DNA"/>
</dbReference>
<dbReference type="RefSeq" id="WP_000720319.1">
    <property type="nucleotide sequence ID" value="NC_008600.1"/>
</dbReference>
<dbReference type="SMR" id="A0RBB0"/>
<dbReference type="GeneID" id="83634900"/>
<dbReference type="KEGG" id="btl:BALH_1147"/>
<dbReference type="HOGENOM" id="CLU_000604_1_1_9"/>
<dbReference type="GO" id="GO:0043190">
    <property type="term" value="C:ATP-binding cassette (ABC) transporter complex"/>
    <property type="evidence" value="ECO:0007669"/>
    <property type="project" value="InterPro"/>
</dbReference>
<dbReference type="GO" id="GO:0015594">
    <property type="term" value="F:ABC-type putrescine transporter activity"/>
    <property type="evidence" value="ECO:0007669"/>
    <property type="project" value="InterPro"/>
</dbReference>
<dbReference type="GO" id="GO:0005524">
    <property type="term" value="F:ATP binding"/>
    <property type="evidence" value="ECO:0007669"/>
    <property type="project" value="UniProtKB-KW"/>
</dbReference>
<dbReference type="GO" id="GO:0016887">
    <property type="term" value="F:ATP hydrolysis activity"/>
    <property type="evidence" value="ECO:0007669"/>
    <property type="project" value="InterPro"/>
</dbReference>
<dbReference type="CDD" id="cd03300">
    <property type="entry name" value="ABC_PotA_N"/>
    <property type="match status" value="1"/>
</dbReference>
<dbReference type="FunFam" id="3.40.50.300:FF:000133">
    <property type="entry name" value="Spermidine/putrescine import ATP-binding protein PotA"/>
    <property type="match status" value="1"/>
</dbReference>
<dbReference type="Gene3D" id="3.40.50.300">
    <property type="entry name" value="P-loop containing nucleotide triphosphate hydrolases"/>
    <property type="match status" value="1"/>
</dbReference>
<dbReference type="InterPro" id="IPR003593">
    <property type="entry name" value="AAA+_ATPase"/>
</dbReference>
<dbReference type="InterPro" id="IPR050093">
    <property type="entry name" value="ABC_SmlMolc_Importer"/>
</dbReference>
<dbReference type="InterPro" id="IPR003439">
    <property type="entry name" value="ABC_transporter-like_ATP-bd"/>
</dbReference>
<dbReference type="InterPro" id="IPR017871">
    <property type="entry name" value="ABC_transporter-like_CS"/>
</dbReference>
<dbReference type="InterPro" id="IPR008995">
    <property type="entry name" value="Mo/tungstate-bd_C_term_dom"/>
</dbReference>
<dbReference type="InterPro" id="IPR027417">
    <property type="entry name" value="P-loop_NTPase"/>
</dbReference>
<dbReference type="InterPro" id="IPR017879">
    <property type="entry name" value="PotA_ATP-bd"/>
</dbReference>
<dbReference type="InterPro" id="IPR013611">
    <property type="entry name" value="Transp-assoc_OB_typ2"/>
</dbReference>
<dbReference type="PANTHER" id="PTHR42781">
    <property type="entry name" value="SPERMIDINE/PUTRESCINE IMPORT ATP-BINDING PROTEIN POTA"/>
    <property type="match status" value="1"/>
</dbReference>
<dbReference type="PANTHER" id="PTHR42781:SF4">
    <property type="entry name" value="SPERMIDINE_PUTRESCINE IMPORT ATP-BINDING PROTEIN POTA"/>
    <property type="match status" value="1"/>
</dbReference>
<dbReference type="Pfam" id="PF00005">
    <property type="entry name" value="ABC_tran"/>
    <property type="match status" value="1"/>
</dbReference>
<dbReference type="Pfam" id="PF08402">
    <property type="entry name" value="TOBE_2"/>
    <property type="match status" value="1"/>
</dbReference>
<dbReference type="SMART" id="SM00382">
    <property type="entry name" value="AAA"/>
    <property type="match status" value="1"/>
</dbReference>
<dbReference type="SUPFAM" id="SSF50331">
    <property type="entry name" value="MOP-like"/>
    <property type="match status" value="1"/>
</dbReference>
<dbReference type="SUPFAM" id="SSF52540">
    <property type="entry name" value="P-loop containing nucleoside triphosphate hydrolases"/>
    <property type="match status" value="1"/>
</dbReference>
<dbReference type="PROSITE" id="PS00211">
    <property type="entry name" value="ABC_TRANSPORTER_1"/>
    <property type="match status" value="1"/>
</dbReference>
<dbReference type="PROSITE" id="PS50893">
    <property type="entry name" value="ABC_TRANSPORTER_2"/>
    <property type="match status" value="1"/>
</dbReference>
<dbReference type="PROSITE" id="PS51305">
    <property type="entry name" value="POTA"/>
    <property type="match status" value="1"/>
</dbReference>
<reference key="1">
    <citation type="journal article" date="2007" name="J. Bacteriol.">
        <title>The complete genome sequence of Bacillus thuringiensis Al Hakam.</title>
        <authorList>
            <person name="Challacombe J.F."/>
            <person name="Altherr M.R."/>
            <person name="Xie G."/>
            <person name="Bhotika S.S."/>
            <person name="Brown N."/>
            <person name="Bruce D."/>
            <person name="Campbell C.S."/>
            <person name="Campbell M.L."/>
            <person name="Chen J."/>
            <person name="Chertkov O."/>
            <person name="Cleland C."/>
            <person name="Dimitrijevic M."/>
            <person name="Doggett N.A."/>
            <person name="Fawcett J.J."/>
            <person name="Glavina T."/>
            <person name="Goodwin L.A."/>
            <person name="Green L.D."/>
            <person name="Han C.S."/>
            <person name="Hill K.K."/>
            <person name="Hitchcock P."/>
            <person name="Jackson P.J."/>
            <person name="Keim P."/>
            <person name="Kewalramani A.R."/>
            <person name="Longmire J."/>
            <person name="Lucas S."/>
            <person name="Malfatti S."/>
            <person name="Martinez D."/>
            <person name="McMurry K."/>
            <person name="Meincke L.J."/>
            <person name="Misra M."/>
            <person name="Moseman B.L."/>
            <person name="Mundt M."/>
            <person name="Munk A.C."/>
            <person name="Okinaka R.T."/>
            <person name="Parson-Quintana B."/>
            <person name="Reilly L.P."/>
            <person name="Richardson P."/>
            <person name="Robinson D.L."/>
            <person name="Saunders E."/>
            <person name="Tapia R."/>
            <person name="Tesmer J.G."/>
            <person name="Thayer N."/>
            <person name="Thompson L.S."/>
            <person name="Tice H."/>
            <person name="Ticknor L.O."/>
            <person name="Wills P.L."/>
            <person name="Gilna P."/>
            <person name="Brettin T.S."/>
        </authorList>
    </citation>
    <scope>NUCLEOTIDE SEQUENCE [LARGE SCALE GENOMIC DNA]</scope>
    <source>
        <strain>Al Hakam</strain>
    </source>
</reference>
<organism>
    <name type="scientific">Bacillus thuringiensis (strain Al Hakam)</name>
    <dbReference type="NCBI Taxonomy" id="412694"/>
    <lineage>
        <taxon>Bacteria</taxon>
        <taxon>Bacillati</taxon>
        <taxon>Bacillota</taxon>
        <taxon>Bacilli</taxon>
        <taxon>Bacillales</taxon>
        <taxon>Bacillaceae</taxon>
        <taxon>Bacillus</taxon>
        <taxon>Bacillus cereus group</taxon>
    </lineage>
</organism>
<feature type="chain" id="PRO_0000286195" description="Spermidine/putrescine import ATP-binding protein PotA">
    <location>
        <begin position="1"/>
        <end position="327"/>
    </location>
</feature>
<feature type="domain" description="ABC transporter" evidence="1">
    <location>
        <begin position="5"/>
        <end position="235"/>
    </location>
</feature>
<feature type="binding site" evidence="1">
    <location>
        <begin position="37"/>
        <end position="44"/>
    </location>
    <ligand>
        <name>ATP</name>
        <dbReference type="ChEBI" id="CHEBI:30616"/>
    </ligand>
</feature>
<protein>
    <recommendedName>
        <fullName evidence="1">Spermidine/putrescine import ATP-binding protein PotA</fullName>
        <ecNumber evidence="1">7.6.2.11</ecNumber>
    </recommendedName>
</protein>
<gene>
    <name evidence="1" type="primary">potA</name>
    <name type="ordered locus">BALH_1147</name>
</gene>
<proteinExistence type="inferred from homology"/>
<name>POTA_BACAH</name>
<evidence type="ECO:0000255" key="1">
    <source>
        <dbReference type="HAMAP-Rule" id="MF_01726"/>
    </source>
</evidence>
<keyword id="KW-0067">ATP-binding</keyword>
<keyword id="KW-1003">Cell membrane</keyword>
<keyword id="KW-0472">Membrane</keyword>
<keyword id="KW-0547">Nucleotide-binding</keyword>
<keyword id="KW-1278">Translocase</keyword>
<keyword id="KW-0813">Transport</keyword>
<accession>A0RBB0</accession>
<comment type="function">
    <text evidence="1">Part of the ABC transporter complex PotABCD involved in spermidine/putrescine import. Responsible for energy coupling to the transport system.</text>
</comment>
<comment type="catalytic activity">
    <reaction evidence="1">
        <text>ATP + H2O + polyamine-[polyamine-binding protein]Side 1 = ADP + phosphate + polyamineSide 2 + [polyamine-binding protein]Side 1.</text>
        <dbReference type="EC" id="7.6.2.11"/>
    </reaction>
</comment>
<comment type="subunit">
    <text evidence="1">The complex is composed of two ATP-binding proteins (PotA), two transmembrane proteins (PotB and PotC) and a solute-binding protein (PotD).</text>
</comment>
<comment type="subcellular location">
    <subcellularLocation>
        <location evidence="1">Cell membrane</location>
        <topology evidence="1">Peripheral membrane protein</topology>
    </subcellularLocation>
</comment>
<comment type="similarity">
    <text evidence="1">Belongs to the ABC transporter superfamily. Spermidine/putrescine importer (TC 3.A.1.11.1) family.</text>
</comment>